<feature type="chain" id="PRO_1000122262" description="Large ribosomal subunit protein bL20">
    <location>
        <begin position="1"/>
        <end position="117"/>
    </location>
</feature>
<evidence type="ECO:0000255" key="1">
    <source>
        <dbReference type="HAMAP-Rule" id="MF_00382"/>
    </source>
</evidence>
<evidence type="ECO:0000305" key="2"/>
<organism>
    <name type="scientific">Actinobacillus pleuropneumoniae serotype 7 (strain AP76)</name>
    <dbReference type="NCBI Taxonomy" id="537457"/>
    <lineage>
        <taxon>Bacteria</taxon>
        <taxon>Pseudomonadati</taxon>
        <taxon>Pseudomonadota</taxon>
        <taxon>Gammaproteobacteria</taxon>
        <taxon>Pasteurellales</taxon>
        <taxon>Pasteurellaceae</taxon>
        <taxon>Actinobacillus</taxon>
    </lineage>
</organism>
<name>RL20_ACTP7</name>
<comment type="function">
    <text evidence="1">Binds directly to 23S ribosomal RNA and is necessary for the in vitro assembly process of the 50S ribosomal subunit. It is not involved in the protein synthesizing functions of that subunit.</text>
</comment>
<comment type="similarity">
    <text evidence="1">Belongs to the bacterial ribosomal protein bL20 family.</text>
</comment>
<protein>
    <recommendedName>
        <fullName evidence="1">Large ribosomal subunit protein bL20</fullName>
    </recommendedName>
    <alternativeName>
        <fullName evidence="2">50S ribosomal protein L20</fullName>
    </alternativeName>
</protein>
<accession>B3H067</accession>
<sequence>MARVKRGVIARARHKKVLKAAKGYYGARSRVYRVAFQAVIKAGQYAYRDRRQRKRQFRQLWIARINAAARQNGLSYSKFINGLKKVSVEIDRKILADIAVFDKVAFAALVEKAKSAL</sequence>
<keyword id="KW-0687">Ribonucleoprotein</keyword>
<keyword id="KW-0689">Ribosomal protein</keyword>
<keyword id="KW-0694">RNA-binding</keyword>
<keyword id="KW-0699">rRNA-binding</keyword>
<reference key="1">
    <citation type="submission" date="2008-06" db="EMBL/GenBank/DDBJ databases">
        <title>Genome and proteome analysis of A. pleuropneumoniae serotype 7.</title>
        <authorList>
            <person name="Linke B."/>
            <person name="Buettner F."/>
            <person name="Martinez-Arias R."/>
            <person name="Goesmann A."/>
            <person name="Baltes N."/>
            <person name="Tegetmeyer H."/>
            <person name="Singh M."/>
            <person name="Gerlach G.F."/>
        </authorList>
    </citation>
    <scope>NUCLEOTIDE SEQUENCE [LARGE SCALE GENOMIC DNA]</scope>
    <source>
        <strain>AP76</strain>
    </source>
</reference>
<gene>
    <name evidence="1" type="primary">rplT</name>
    <name type="ordered locus">APP7_0227</name>
</gene>
<proteinExistence type="inferred from homology"/>
<dbReference type="EMBL" id="CP001091">
    <property type="protein sequence ID" value="ACE60879.1"/>
    <property type="molecule type" value="Genomic_DNA"/>
</dbReference>
<dbReference type="RefSeq" id="WP_012478307.1">
    <property type="nucleotide sequence ID" value="NC_010939.1"/>
</dbReference>
<dbReference type="SMR" id="B3H067"/>
<dbReference type="KEGG" id="apa:APP7_0227"/>
<dbReference type="HOGENOM" id="CLU_123265_0_1_6"/>
<dbReference type="Proteomes" id="UP000001226">
    <property type="component" value="Chromosome"/>
</dbReference>
<dbReference type="GO" id="GO:1990904">
    <property type="term" value="C:ribonucleoprotein complex"/>
    <property type="evidence" value="ECO:0007669"/>
    <property type="project" value="UniProtKB-KW"/>
</dbReference>
<dbReference type="GO" id="GO:0005840">
    <property type="term" value="C:ribosome"/>
    <property type="evidence" value="ECO:0007669"/>
    <property type="project" value="UniProtKB-KW"/>
</dbReference>
<dbReference type="GO" id="GO:0019843">
    <property type="term" value="F:rRNA binding"/>
    <property type="evidence" value="ECO:0007669"/>
    <property type="project" value="UniProtKB-UniRule"/>
</dbReference>
<dbReference type="GO" id="GO:0003735">
    <property type="term" value="F:structural constituent of ribosome"/>
    <property type="evidence" value="ECO:0007669"/>
    <property type="project" value="InterPro"/>
</dbReference>
<dbReference type="GO" id="GO:0000027">
    <property type="term" value="P:ribosomal large subunit assembly"/>
    <property type="evidence" value="ECO:0007669"/>
    <property type="project" value="UniProtKB-UniRule"/>
</dbReference>
<dbReference type="GO" id="GO:0006412">
    <property type="term" value="P:translation"/>
    <property type="evidence" value="ECO:0007669"/>
    <property type="project" value="InterPro"/>
</dbReference>
<dbReference type="CDD" id="cd07026">
    <property type="entry name" value="Ribosomal_L20"/>
    <property type="match status" value="1"/>
</dbReference>
<dbReference type="FunFam" id="1.10.1900.20:FF:000001">
    <property type="entry name" value="50S ribosomal protein L20"/>
    <property type="match status" value="1"/>
</dbReference>
<dbReference type="Gene3D" id="6.10.160.10">
    <property type="match status" value="1"/>
</dbReference>
<dbReference type="Gene3D" id="1.10.1900.20">
    <property type="entry name" value="Ribosomal protein L20"/>
    <property type="match status" value="1"/>
</dbReference>
<dbReference type="HAMAP" id="MF_00382">
    <property type="entry name" value="Ribosomal_bL20"/>
    <property type="match status" value="1"/>
</dbReference>
<dbReference type="InterPro" id="IPR005813">
    <property type="entry name" value="Ribosomal_bL20"/>
</dbReference>
<dbReference type="InterPro" id="IPR049946">
    <property type="entry name" value="RIBOSOMAL_L20_CS"/>
</dbReference>
<dbReference type="InterPro" id="IPR035566">
    <property type="entry name" value="Ribosomal_protein_bL20_C"/>
</dbReference>
<dbReference type="NCBIfam" id="TIGR01032">
    <property type="entry name" value="rplT_bact"/>
    <property type="match status" value="1"/>
</dbReference>
<dbReference type="PANTHER" id="PTHR10986">
    <property type="entry name" value="39S RIBOSOMAL PROTEIN L20"/>
    <property type="match status" value="1"/>
</dbReference>
<dbReference type="Pfam" id="PF00453">
    <property type="entry name" value="Ribosomal_L20"/>
    <property type="match status" value="1"/>
</dbReference>
<dbReference type="PRINTS" id="PR00062">
    <property type="entry name" value="RIBOSOMALL20"/>
</dbReference>
<dbReference type="SUPFAM" id="SSF74731">
    <property type="entry name" value="Ribosomal protein L20"/>
    <property type="match status" value="1"/>
</dbReference>
<dbReference type="PROSITE" id="PS00937">
    <property type="entry name" value="RIBOSOMAL_L20"/>
    <property type="match status" value="1"/>
</dbReference>